<proteinExistence type="inferred from homology"/>
<protein>
    <recommendedName>
        <fullName evidence="1">Low affinity potassium transport system protein Kup</fullName>
    </recommendedName>
    <alternativeName>
        <fullName evidence="1">Kup system potassium uptake protein</fullName>
    </alternativeName>
</protein>
<evidence type="ECO:0000255" key="1">
    <source>
        <dbReference type="HAMAP-Rule" id="MF_01522"/>
    </source>
</evidence>
<evidence type="ECO:0000305" key="2"/>
<organism>
    <name type="scientific">Salmonella choleraesuis (strain SC-B67)</name>
    <dbReference type="NCBI Taxonomy" id="321314"/>
    <lineage>
        <taxon>Bacteria</taxon>
        <taxon>Pseudomonadati</taxon>
        <taxon>Pseudomonadota</taxon>
        <taxon>Gammaproteobacteria</taxon>
        <taxon>Enterobacterales</taxon>
        <taxon>Enterobacteriaceae</taxon>
        <taxon>Salmonella</taxon>
    </lineage>
</organism>
<reference key="1">
    <citation type="journal article" date="2005" name="Nucleic Acids Res.">
        <title>The genome sequence of Salmonella enterica serovar Choleraesuis, a highly invasive and resistant zoonotic pathogen.</title>
        <authorList>
            <person name="Chiu C.-H."/>
            <person name="Tang P."/>
            <person name="Chu C."/>
            <person name="Hu S."/>
            <person name="Bao Q."/>
            <person name="Yu J."/>
            <person name="Chou Y.-Y."/>
            <person name="Wang H.-S."/>
            <person name="Lee Y.-S."/>
        </authorList>
    </citation>
    <scope>NUCLEOTIDE SEQUENCE [LARGE SCALE GENOMIC DNA]</scope>
    <source>
        <strain>SC-B67</strain>
    </source>
</reference>
<dbReference type="EMBL" id="AE017220">
    <property type="protein sequence ID" value="AAX67699.1"/>
    <property type="molecule type" value="Genomic_DNA"/>
</dbReference>
<dbReference type="RefSeq" id="WP_000102338.1">
    <property type="nucleotide sequence ID" value="NC_006905.1"/>
</dbReference>
<dbReference type="KEGG" id="sec:SCH_3793"/>
<dbReference type="HOGENOM" id="CLU_008142_4_2_6"/>
<dbReference type="Proteomes" id="UP000000538">
    <property type="component" value="Chromosome"/>
</dbReference>
<dbReference type="GO" id="GO:0005886">
    <property type="term" value="C:plasma membrane"/>
    <property type="evidence" value="ECO:0007669"/>
    <property type="project" value="UniProtKB-SubCell"/>
</dbReference>
<dbReference type="GO" id="GO:0015079">
    <property type="term" value="F:potassium ion transmembrane transporter activity"/>
    <property type="evidence" value="ECO:0007669"/>
    <property type="project" value="UniProtKB-UniRule"/>
</dbReference>
<dbReference type="GO" id="GO:0015293">
    <property type="term" value="F:symporter activity"/>
    <property type="evidence" value="ECO:0007669"/>
    <property type="project" value="UniProtKB-UniRule"/>
</dbReference>
<dbReference type="HAMAP" id="MF_01522">
    <property type="entry name" value="Kup"/>
    <property type="match status" value="1"/>
</dbReference>
<dbReference type="InterPro" id="IPR003855">
    <property type="entry name" value="K+_transporter"/>
</dbReference>
<dbReference type="InterPro" id="IPR053952">
    <property type="entry name" value="K_trans_C"/>
</dbReference>
<dbReference type="InterPro" id="IPR053951">
    <property type="entry name" value="K_trans_N"/>
</dbReference>
<dbReference type="InterPro" id="IPR023051">
    <property type="entry name" value="Kup"/>
</dbReference>
<dbReference type="NCBIfam" id="TIGR00794">
    <property type="entry name" value="kup"/>
    <property type="match status" value="1"/>
</dbReference>
<dbReference type="NCBIfam" id="NF008015">
    <property type="entry name" value="PRK10745.1"/>
    <property type="match status" value="1"/>
</dbReference>
<dbReference type="PANTHER" id="PTHR30540:SF79">
    <property type="entry name" value="LOW AFFINITY POTASSIUM TRANSPORT SYSTEM PROTEIN KUP"/>
    <property type="match status" value="1"/>
</dbReference>
<dbReference type="PANTHER" id="PTHR30540">
    <property type="entry name" value="OSMOTIC STRESS POTASSIUM TRANSPORTER"/>
    <property type="match status" value="1"/>
</dbReference>
<dbReference type="Pfam" id="PF02705">
    <property type="entry name" value="K_trans"/>
    <property type="match status" value="1"/>
</dbReference>
<dbReference type="Pfam" id="PF22776">
    <property type="entry name" value="K_trans_C"/>
    <property type="match status" value="1"/>
</dbReference>
<sequence>MSTDNKQSLPAITLAAIGVVYGDIGTSPLYTLRECLSGQFGFGVERDAVFGFLSLIFWLLIFVVSIKYLTFVMRADNAGEGGILTLMSLAGRNTSARTTSMLVIMGLIGGSFFYGEVVITPAISVMSAIEGLEIVAPQLDTWIVPLSIIVLTLLFMIQKHGTGMVGKLFAPIMLTWFLILAVLGLRSIIANPEVLHALNPVWAVRFFLEYKTVSFIALGAVVLSITGVEALYADMGHFGKFPIRLAWFTVVLPSLVLNYFGQGALLLKHPEAIKNPFFLLAPDWALIPLLILAALATVIASQAVISGVFSLTRQAVRLGYLSPMRIIHTSEMESGQIYIPFVNWLLYFAVVVVIVSFEHSSNLAAAYGIAVTGTMVLTSILSTTVARKNWHWNKYFVALILIAFLCVDIPLFSANLDKLLSGGWLPLSLGLIMFTIMTTWKSERFRLLRRMHEHGNSLEAMIASLEKSPPVRVPGTAVYMSRALSVIPFALLHNLKHNKVLHERVILLTLRTEDAPYVHNVRRVQIEQLSPTFWRVVASYGWRETPNVEEVFHRCGLEGLSCRMMETSFFMSHESLIVGKRPWYLRLRGKLYLLLQRNALRAPDQFEIPPNRVIELGTQVEI</sequence>
<comment type="function">
    <text evidence="1">Responsible for the low-affinity transport of potassium into the cell. Likely operates as a K(+):H(+) symporter.</text>
</comment>
<comment type="catalytic activity">
    <reaction evidence="1">
        <text>K(+)(in) + H(+)(in) = K(+)(out) + H(+)(out)</text>
        <dbReference type="Rhea" id="RHEA:28490"/>
        <dbReference type="ChEBI" id="CHEBI:15378"/>
        <dbReference type="ChEBI" id="CHEBI:29103"/>
    </reaction>
    <physiologicalReaction direction="right-to-left" evidence="1">
        <dbReference type="Rhea" id="RHEA:28492"/>
    </physiologicalReaction>
</comment>
<comment type="subcellular location">
    <subcellularLocation>
        <location evidence="1">Cell inner membrane</location>
        <topology evidence="1">Multi-pass membrane protein</topology>
    </subcellularLocation>
</comment>
<comment type="similarity">
    <text evidence="1 2">Belongs to the HAK/KUP transporter (TC 2.A.72) family.</text>
</comment>
<gene>
    <name evidence="1" type="primary">kup</name>
    <name type="ordered locus">SCH_3793</name>
</gene>
<accession>Q57HW3</accession>
<feature type="chain" id="PRO_0000209054" description="Low affinity potassium transport system protein Kup">
    <location>
        <begin position="1"/>
        <end position="622"/>
    </location>
</feature>
<feature type="transmembrane region" description="Helical" evidence="1">
    <location>
        <begin position="9"/>
        <end position="29"/>
    </location>
</feature>
<feature type="transmembrane region" description="Helical" evidence="1">
    <location>
        <begin position="49"/>
        <end position="69"/>
    </location>
</feature>
<feature type="transmembrane region" description="Helical" evidence="1">
    <location>
        <begin position="103"/>
        <end position="123"/>
    </location>
</feature>
<feature type="transmembrane region" description="Helical" evidence="1">
    <location>
        <begin position="137"/>
        <end position="157"/>
    </location>
</feature>
<feature type="transmembrane region" description="Helical" evidence="1">
    <location>
        <begin position="165"/>
        <end position="185"/>
    </location>
</feature>
<feature type="transmembrane region" description="Helical" evidence="1">
    <location>
        <begin position="213"/>
        <end position="233"/>
    </location>
</feature>
<feature type="transmembrane region" description="Helical" evidence="1">
    <location>
        <begin position="247"/>
        <end position="267"/>
    </location>
</feature>
<feature type="transmembrane region" description="Helical" evidence="1">
    <location>
        <begin position="276"/>
        <end position="296"/>
    </location>
</feature>
<feature type="transmembrane region" description="Helical" evidence="1">
    <location>
        <begin position="337"/>
        <end position="357"/>
    </location>
</feature>
<feature type="transmembrane region" description="Helical" evidence="1">
    <location>
        <begin position="363"/>
        <end position="383"/>
    </location>
</feature>
<feature type="transmembrane region" description="Helical" evidence="1">
    <location>
        <begin position="396"/>
        <end position="416"/>
    </location>
</feature>
<feature type="transmembrane region" description="Helical" evidence="1">
    <location>
        <begin position="419"/>
        <end position="439"/>
    </location>
</feature>
<keyword id="KW-0997">Cell inner membrane</keyword>
<keyword id="KW-1003">Cell membrane</keyword>
<keyword id="KW-0406">Ion transport</keyword>
<keyword id="KW-0472">Membrane</keyword>
<keyword id="KW-0630">Potassium</keyword>
<keyword id="KW-0633">Potassium transport</keyword>
<keyword id="KW-0769">Symport</keyword>
<keyword id="KW-0812">Transmembrane</keyword>
<keyword id="KW-1133">Transmembrane helix</keyword>
<keyword id="KW-0813">Transport</keyword>
<name>KUP_SALCH</name>